<accession>P02011</accession>
<dbReference type="PIR" id="A02340">
    <property type="entry name" value="HAFG3T"/>
</dbReference>
<dbReference type="SMR" id="P02011"/>
<dbReference type="iPTMnet" id="P02011"/>
<dbReference type="GO" id="GO:0072562">
    <property type="term" value="C:blood microparticle"/>
    <property type="evidence" value="ECO:0007669"/>
    <property type="project" value="TreeGrafter"/>
</dbReference>
<dbReference type="GO" id="GO:0031838">
    <property type="term" value="C:haptoglobin-hemoglobin complex"/>
    <property type="evidence" value="ECO:0007669"/>
    <property type="project" value="TreeGrafter"/>
</dbReference>
<dbReference type="GO" id="GO:0005833">
    <property type="term" value="C:hemoglobin complex"/>
    <property type="evidence" value="ECO:0007669"/>
    <property type="project" value="InterPro"/>
</dbReference>
<dbReference type="GO" id="GO:0031720">
    <property type="term" value="F:haptoglobin binding"/>
    <property type="evidence" value="ECO:0007669"/>
    <property type="project" value="TreeGrafter"/>
</dbReference>
<dbReference type="GO" id="GO:0020037">
    <property type="term" value="F:heme binding"/>
    <property type="evidence" value="ECO:0007669"/>
    <property type="project" value="InterPro"/>
</dbReference>
<dbReference type="GO" id="GO:0005506">
    <property type="term" value="F:iron ion binding"/>
    <property type="evidence" value="ECO:0007669"/>
    <property type="project" value="InterPro"/>
</dbReference>
<dbReference type="GO" id="GO:0043177">
    <property type="term" value="F:organic acid binding"/>
    <property type="evidence" value="ECO:0007669"/>
    <property type="project" value="TreeGrafter"/>
</dbReference>
<dbReference type="GO" id="GO:0019825">
    <property type="term" value="F:oxygen binding"/>
    <property type="evidence" value="ECO:0007669"/>
    <property type="project" value="InterPro"/>
</dbReference>
<dbReference type="GO" id="GO:0005344">
    <property type="term" value="F:oxygen carrier activity"/>
    <property type="evidence" value="ECO:0007669"/>
    <property type="project" value="UniProtKB-KW"/>
</dbReference>
<dbReference type="GO" id="GO:0004601">
    <property type="term" value="F:peroxidase activity"/>
    <property type="evidence" value="ECO:0007669"/>
    <property type="project" value="TreeGrafter"/>
</dbReference>
<dbReference type="GO" id="GO:0042744">
    <property type="term" value="P:hydrogen peroxide catabolic process"/>
    <property type="evidence" value="ECO:0007669"/>
    <property type="project" value="TreeGrafter"/>
</dbReference>
<dbReference type="CDD" id="cd08927">
    <property type="entry name" value="Hb-alpha-like"/>
    <property type="match status" value="1"/>
</dbReference>
<dbReference type="FunFam" id="1.10.490.10:FF:000002">
    <property type="entry name" value="Hemoglobin subunit alpha"/>
    <property type="match status" value="1"/>
</dbReference>
<dbReference type="Gene3D" id="1.10.490.10">
    <property type="entry name" value="Globins"/>
    <property type="match status" value="1"/>
</dbReference>
<dbReference type="InterPro" id="IPR000971">
    <property type="entry name" value="Globin"/>
</dbReference>
<dbReference type="InterPro" id="IPR009050">
    <property type="entry name" value="Globin-like_sf"/>
</dbReference>
<dbReference type="InterPro" id="IPR012292">
    <property type="entry name" value="Globin/Proto"/>
</dbReference>
<dbReference type="InterPro" id="IPR002338">
    <property type="entry name" value="Hemoglobin_a-typ"/>
</dbReference>
<dbReference type="InterPro" id="IPR050056">
    <property type="entry name" value="Hemoglobin_oxygen_transport"/>
</dbReference>
<dbReference type="InterPro" id="IPR002339">
    <property type="entry name" value="Hemoglobin_pi"/>
</dbReference>
<dbReference type="PANTHER" id="PTHR11442">
    <property type="entry name" value="HEMOGLOBIN FAMILY MEMBER"/>
    <property type="match status" value="1"/>
</dbReference>
<dbReference type="PANTHER" id="PTHR11442:SF41">
    <property type="entry name" value="HEMOGLOBIN SUBUNIT ZETA"/>
    <property type="match status" value="1"/>
</dbReference>
<dbReference type="Pfam" id="PF00042">
    <property type="entry name" value="Globin"/>
    <property type="match status" value="1"/>
</dbReference>
<dbReference type="PRINTS" id="PR00612">
    <property type="entry name" value="ALPHAHAEM"/>
</dbReference>
<dbReference type="PRINTS" id="PR00815">
    <property type="entry name" value="PIHAEM"/>
</dbReference>
<dbReference type="SUPFAM" id="SSF46458">
    <property type="entry name" value="Globin-like"/>
    <property type="match status" value="1"/>
</dbReference>
<dbReference type="PROSITE" id="PS01033">
    <property type="entry name" value="GLOBIN"/>
    <property type="match status" value="1"/>
</dbReference>
<organism>
    <name type="scientific">Aquarana catesbeiana</name>
    <name type="common">American bullfrog</name>
    <name type="synonym">Rana catesbeiana</name>
    <dbReference type="NCBI Taxonomy" id="8400"/>
    <lineage>
        <taxon>Eukaryota</taxon>
        <taxon>Metazoa</taxon>
        <taxon>Chordata</taxon>
        <taxon>Craniata</taxon>
        <taxon>Vertebrata</taxon>
        <taxon>Euteleostomi</taxon>
        <taxon>Amphibia</taxon>
        <taxon>Batrachia</taxon>
        <taxon>Anura</taxon>
        <taxon>Neobatrachia</taxon>
        <taxon>Ranoidea</taxon>
        <taxon>Ranidae</taxon>
        <taxon>Aquarana</taxon>
    </lineage>
</organism>
<comment type="function">
    <text>This is a tadpole (larval) alpha chain.</text>
</comment>
<comment type="subunit">
    <text>Heterotetramer of two alpha chains and two beta chains.</text>
</comment>
<comment type="tissue specificity">
    <text>Red blood cells.</text>
</comment>
<comment type="similarity">
    <text evidence="1">Belongs to the globin family.</text>
</comment>
<keyword id="KW-0007">Acetylation</keyword>
<keyword id="KW-0903">Direct protein sequencing</keyword>
<keyword id="KW-0349">Heme</keyword>
<keyword id="KW-0408">Iron</keyword>
<keyword id="KW-0479">Metal-binding</keyword>
<keyword id="KW-0561">Oxygen transport</keyword>
<keyword id="KW-0813">Transport</keyword>
<reference key="1">
    <citation type="journal article" date="1980" name="J. Biol. Chem.">
        <title>Hemoglobins of the tadpole of the bullfrog, Rana catesbeiana. Amino acid sequence of the alpha chain of a major component.</title>
        <authorList>
            <person name="Maruyama T."/>
            <person name="Watt K.W.K."/>
            <person name="Riggs A."/>
        </authorList>
    </citation>
    <scope>PROTEIN SEQUENCE</scope>
    <scope>ACETYLATION AT SER-1</scope>
</reference>
<sequence>SLSASEKAAVLSIVGKIGSQGSALGSEALTRLFLSFPQTKTYFPHFDLTPGSADLNTHGGKIINALAGAANHLDDLAGNLSSLSDLHAYNLRVDPGNFPLLAHIIQVVLATHFPGDFTAEVQAAWDKFLALVSAVLTSKYR</sequence>
<name>HBA3_AQUCT</name>
<feature type="chain" id="PRO_0000052749" description="Hemoglobin subunit alpha-3">
    <location>
        <begin position="1"/>
        <end position="141"/>
    </location>
</feature>
<feature type="domain" description="Globin" evidence="1">
    <location>
        <begin position="1"/>
        <end position="141"/>
    </location>
</feature>
<feature type="binding site" evidence="1">
    <location>
        <position position="58"/>
    </location>
    <ligand>
        <name>O2</name>
        <dbReference type="ChEBI" id="CHEBI:15379"/>
    </ligand>
</feature>
<feature type="binding site" description="proximal binding residue" evidence="1">
    <location>
        <position position="87"/>
    </location>
    <ligand>
        <name>heme b</name>
        <dbReference type="ChEBI" id="CHEBI:60344"/>
    </ligand>
    <ligandPart>
        <name>Fe</name>
        <dbReference type="ChEBI" id="CHEBI:18248"/>
    </ligandPart>
</feature>
<feature type="modified residue" description="N-acetylserine" evidence="2">
    <location>
        <position position="1"/>
    </location>
</feature>
<proteinExistence type="evidence at protein level"/>
<evidence type="ECO:0000255" key="1">
    <source>
        <dbReference type="PROSITE-ProRule" id="PRU00238"/>
    </source>
</evidence>
<evidence type="ECO:0000269" key="2">
    <source>
    </source>
</evidence>
<protein>
    <recommendedName>
        <fullName>Hemoglobin subunit alpha-3</fullName>
    </recommendedName>
    <alternativeName>
        <fullName>Alpha-3-globin</fullName>
    </alternativeName>
    <alternativeName>
        <fullName>Hemoglobin alpha-3 chain</fullName>
    </alternativeName>
    <alternativeName>
        <fullName>Hemoglobin alpha-III chain, larval</fullName>
    </alternativeName>
</protein>